<proteinExistence type="inferred from homology"/>
<feature type="chain" id="PRO_0000319636" description="Phosphoribosyl-ATP pyrophosphatase">
    <location>
        <begin position="1"/>
        <end position="132"/>
    </location>
</feature>
<evidence type="ECO:0000255" key="1">
    <source>
        <dbReference type="HAMAP-Rule" id="MF_01020"/>
    </source>
</evidence>
<keyword id="KW-0028">Amino-acid biosynthesis</keyword>
<keyword id="KW-0067">ATP-binding</keyword>
<keyword id="KW-0963">Cytoplasm</keyword>
<keyword id="KW-0368">Histidine biosynthesis</keyword>
<keyword id="KW-0378">Hydrolase</keyword>
<keyword id="KW-0547">Nucleotide-binding</keyword>
<comment type="catalytic activity">
    <reaction evidence="1">
        <text>1-(5-phospho-beta-D-ribosyl)-ATP + H2O = 1-(5-phospho-beta-D-ribosyl)-5'-AMP + diphosphate + H(+)</text>
        <dbReference type="Rhea" id="RHEA:22828"/>
        <dbReference type="ChEBI" id="CHEBI:15377"/>
        <dbReference type="ChEBI" id="CHEBI:15378"/>
        <dbReference type="ChEBI" id="CHEBI:33019"/>
        <dbReference type="ChEBI" id="CHEBI:59457"/>
        <dbReference type="ChEBI" id="CHEBI:73183"/>
        <dbReference type="EC" id="3.6.1.31"/>
    </reaction>
</comment>
<comment type="pathway">
    <text evidence="1">Amino-acid biosynthesis; L-histidine biosynthesis; L-histidine from 5-phospho-alpha-D-ribose 1-diphosphate: step 2/9.</text>
</comment>
<comment type="subcellular location">
    <subcellularLocation>
        <location evidence="1">Cytoplasm</location>
    </subcellularLocation>
</comment>
<comment type="similarity">
    <text evidence="1">Belongs to the PRA-PH family.</text>
</comment>
<sequence>MTRTDTHAPLSQDALARLAGVIESRKPANGGDPDKSYVARLLHKGPDAFLKKVGEEATEVVMAAKDLDHGADKAKLVYEVADLWFHSMIALAHYGLAPADVIAELERREGISGIEEKALRKAAARSSEEGGA</sequence>
<accession>A1W446</accession>
<reference key="1">
    <citation type="submission" date="2006-12" db="EMBL/GenBank/DDBJ databases">
        <title>Complete sequence of chromosome 1 of Acidovorax sp. JS42.</title>
        <authorList>
            <person name="Copeland A."/>
            <person name="Lucas S."/>
            <person name="Lapidus A."/>
            <person name="Barry K."/>
            <person name="Detter J.C."/>
            <person name="Glavina del Rio T."/>
            <person name="Dalin E."/>
            <person name="Tice H."/>
            <person name="Pitluck S."/>
            <person name="Chertkov O."/>
            <person name="Brettin T."/>
            <person name="Bruce D."/>
            <person name="Han C."/>
            <person name="Tapia R."/>
            <person name="Gilna P."/>
            <person name="Schmutz J."/>
            <person name="Larimer F."/>
            <person name="Land M."/>
            <person name="Hauser L."/>
            <person name="Kyrpides N."/>
            <person name="Kim E."/>
            <person name="Stahl D."/>
            <person name="Richardson P."/>
        </authorList>
    </citation>
    <scope>NUCLEOTIDE SEQUENCE [LARGE SCALE GENOMIC DNA]</scope>
    <source>
        <strain>JS42</strain>
    </source>
</reference>
<organism>
    <name type="scientific">Acidovorax sp. (strain JS42)</name>
    <dbReference type="NCBI Taxonomy" id="232721"/>
    <lineage>
        <taxon>Bacteria</taxon>
        <taxon>Pseudomonadati</taxon>
        <taxon>Pseudomonadota</taxon>
        <taxon>Betaproteobacteria</taxon>
        <taxon>Burkholderiales</taxon>
        <taxon>Comamonadaceae</taxon>
        <taxon>Acidovorax</taxon>
    </lineage>
</organism>
<gene>
    <name evidence="1" type="primary">hisE</name>
    <name type="ordered locus">Ajs_0777</name>
</gene>
<dbReference type="EC" id="3.6.1.31" evidence="1"/>
<dbReference type="EMBL" id="CP000539">
    <property type="protein sequence ID" value="ABM41021.1"/>
    <property type="molecule type" value="Genomic_DNA"/>
</dbReference>
<dbReference type="SMR" id="A1W446"/>
<dbReference type="STRING" id="232721.Ajs_0777"/>
<dbReference type="KEGG" id="ajs:Ajs_0777"/>
<dbReference type="eggNOG" id="COG0140">
    <property type="taxonomic scope" value="Bacteria"/>
</dbReference>
<dbReference type="HOGENOM" id="CLU_123337_1_2_4"/>
<dbReference type="UniPathway" id="UPA00031">
    <property type="reaction ID" value="UER00007"/>
</dbReference>
<dbReference type="Proteomes" id="UP000000645">
    <property type="component" value="Chromosome"/>
</dbReference>
<dbReference type="GO" id="GO:0005737">
    <property type="term" value="C:cytoplasm"/>
    <property type="evidence" value="ECO:0007669"/>
    <property type="project" value="UniProtKB-SubCell"/>
</dbReference>
<dbReference type="GO" id="GO:0005524">
    <property type="term" value="F:ATP binding"/>
    <property type="evidence" value="ECO:0007669"/>
    <property type="project" value="UniProtKB-KW"/>
</dbReference>
<dbReference type="GO" id="GO:0004636">
    <property type="term" value="F:phosphoribosyl-ATP diphosphatase activity"/>
    <property type="evidence" value="ECO:0007669"/>
    <property type="project" value="UniProtKB-UniRule"/>
</dbReference>
<dbReference type="GO" id="GO:0000105">
    <property type="term" value="P:L-histidine biosynthetic process"/>
    <property type="evidence" value="ECO:0007669"/>
    <property type="project" value="UniProtKB-UniRule"/>
</dbReference>
<dbReference type="CDD" id="cd11534">
    <property type="entry name" value="NTP-PPase_HisIE_like"/>
    <property type="match status" value="1"/>
</dbReference>
<dbReference type="Gene3D" id="1.10.287.1080">
    <property type="entry name" value="MazG-like"/>
    <property type="match status" value="1"/>
</dbReference>
<dbReference type="HAMAP" id="MF_01020">
    <property type="entry name" value="HisE"/>
    <property type="match status" value="1"/>
</dbReference>
<dbReference type="InterPro" id="IPR008179">
    <property type="entry name" value="HisE"/>
</dbReference>
<dbReference type="InterPro" id="IPR021130">
    <property type="entry name" value="PRib-ATP_PPHydrolase-like"/>
</dbReference>
<dbReference type="NCBIfam" id="TIGR03188">
    <property type="entry name" value="histidine_hisI"/>
    <property type="match status" value="1"/>
</dbReference>
<dbReference type="NCBIfam" id="NF001611">
    <property type="entry name" value="PRK00400.1-3"/>
    <property type="match status" value="1"/>
</dbReference>
<dbReference type="PANTHER" id="PTHR42945">
    <property type="entry name" value="HISTIDINE BIOSYNTHESIS BIFUNCTIONAL PROTEIN"/>
    <property type="match status" value="1"/>
</dbReference>
<dbReference type="PANTHER" id="PTHR42945:SF9">
    <property type="entry name" value="HISTIDINE BIOSYNTHESIS BIFUNCTIONAL PROTEIN HISIE"/>
    <property type="match status" value="1"/>
</dbReference>
<dbReference type="Pfam" id="PF01503">
    <property type="entry name" value="PRA-PH"/>
    <property type="match status" value="1"/>
</dbReference>
<dbReference type="SUPFAM" id="SSF101386">
    <property type="entry name" value="all-alpha NTP pyrophosphatases"/>
    <property type="match status" value="1"/>
</dbReference>
<protein>
    <recommendedName>
        <fullName evidence="1">Phosphoribosyl-ATP pyrophosphatase</fullName>
        <shortName evidence="1">PRA-PH</shortName>
        <ecNumber evidence="1">3.6.1.31</ecNumber>
    </recommendedName>
</protein>
<name>HIS2_ACISJ</name>